<name>RLMF_CITK8</name>
<gene>
    <name evidence="1" type="primary">rlmF</name>
    <name type="ordered locus">CKO_02316</name>
</gene>
<protein>
    <recommendedName>
        <fullName evidence="1">Ribosomal RNA large subunit methyltransferase F</fullName>
        <ecNumber evidence="1">2.1.1.181</ecNumber>
    </recommendedName>
    <alternativeName>
        <fullName evidence="1">23S rRNA mA1618 methyltransferase</fullName>
    </alternativeName>
    <alternativeName>
        <fullName evidence="1">rRNA adenine N-6-methyltransferase</fullName>
    </alternativeName>
</protein>
<sequence>MSAQKPGLHPRNRHHHRYDLATLCQVTPELAQFLTRTPAGEQSVDFANPLAVKALNKALLAYFYQVANWDIPEGFLCPPVPGRADYIHHLADLLGETTGAIPADASVLDVGTGANCIYPLIGVHEYGWRFTGSEVHAQALASAQVIISGNPGLTRSIRLRRQKDPAAIFNGIIHKNEQYDATLCNPPFHDSAASARAGSERKRRNLGQDKNDALNFGGQQQELWCEGGEVAFIKTMIAESQAFGRQVMWFTTLVSRGENLPPLYRALTDVGAVKVVKKEMAQGQKQSRFIAWTFMDDDQRRRFMARKR</sequence>
<reference key="1">
    <citation type="submission" date="2007-08" db="EMBL/GenBank/DDBJ databases">
        <authorList>
            <consortium name="The Citrobacter koseri Genome Sequencing Project"/>
            <person name="McClelland M."/>
            <person name="Sanderson E.K."/>
            <person name="Porwollik S."/>
            <person name="Spieth J."/>
            <person name="Clifton W.S."/>
            <person name="Latreille P."/>
            <person name="Courtney L."/>
            <person name="Wang C."/>
            <person name="Pepin K."/>
            <person name="Bhonagiri V."/>
            <person name="Nash W."/>
            <person name="Johnson M."/>
            <person name="Thiruvilangam P."/>
            <person name="Wilson R."/>
        </authorList>
    </citation>
    <scope>NUCLEOTIDE SEQUENCE [LARGE SCALE GENOMIC DNA]</scope>
    <source>
        <strain>ATCC BAA-895 / CDC 4225-83 / SGSC4696</strain>
    </source>
</reference>
<evidence type="ECO:0000255" key="1">
    <source>
        <dbReference type="HAMAP-Rule" id="MF_01848"/>
    </source>
</evidence>
<evidence type="ECO:0000256" key="2">
    <source>
        <dbReference type="SAM" id="MobiDB-lite"/>
    </source>
</evidence>
<accession>A8AIX5</accession>
<feature type="chain" id="PRO_0000349898" description="Ribosomal RNA large subunit methyltransferase F">
    <location>
        <begin position="1"/>
        <end position="308"/>
    </location>
</feature>
<feature type="region of interest" description="Disordered" evidence="2">
    <location>
        <begin position="190"/>
        <end position="212"/>
    </location>
</feature>
<keyword id="KW-0963">Cytoplasm</keyword>
<keyword id="KW-0489">Methyltransferase</keyword>
<keyword id="KW-1185">Reference proteome</keyword>
<keyword id="KW-0698">rRNA processing</keyword>
<keyword id="KW-0949">S-adenosyl-L-methionine</keyword>
<keyword id="KW-0808">Transferase</keyword>
<organism>
    <name type="scientific">Citrobacter koseri (strain ATCC BAA-895 / CDC 4225-83 / SGSC4696)</name>
    <dbReference type="NCBI Taxonomy" id="290338"/>
    <lineage>
        <taxon>Bacteria</taxon>
        <taxon>Pseudomonadati</taxon>
        <taxon>Pseudomonadota</taxon>
        <taxon>Gammaproteobacteria</taxon>
        <taxon>Enterobacterales</taxon>
        <taxon>Enterobacteriaceae</taxon>
        <taxon>Citrobacter</taxon>
    </lineage>
</organism>
<proteinExistence type="inferred from homology"/>
<dbReference type="EC" id="2.1.1.181" evidence="1"/>
<dbReference type="EMBL" id="CP000822">
    <property type="protein sequence ID" value="ABV13438.1"/>
    <property type="molecule type" value="Genomic_DNA"/>
</dbReference>
<dbReference type="RefSeq" id="WP_012133165.1">
    <property type="nucleotide sequence ID" value="NC_009792.1"/>
</dbReference>
<dbReference type="SMR" id="A8AIX5"/>
<dbReference type="STRING" id="290338.CKO_02316"/>
<dbReference type="GeneID" id="45136224"/>
<dbReference type="KEGG" id="cko:CKO_02316"/>
<dbReference type="HOGENOM" id="CLU_027534_3_0_6"/>
<dbReference type="OrthoDB" id="1115728at2"/>
<dbReference type="Proteomes" id="UP000008148">
    <property type="component" value="Chromosome"/>
</dbReference>
<dbReference type="GO" id="GO:0005737">
    <property type="term" value="C:cytoplasm"/>
    <property type="evidence" value="ECO:0007669"/>
    <property type="project" value="UniProtKB-SubCell"/>
</dbReference>
<dbReference type="GO" id="GO:0052907">
    <property type="term" value="F:23S rRNA (adenine(1618)-N(6))-methyltransferase activity"/>
    <property type="evidence" value="ECO:0007669"/>
    <property type="project" value="UniProtKB-EC"/>
</dbReference>
<dbReference type="GO" id="GO:0070475">
    <property type="term" value="P:rRNA base methylation"/>
    <property type="evidence" value="ECO:0007669"/>
    <property type="project" value="TreeGrafter"/>
</dbReference>
<dbReference type="FunFam" id="3.40.50.150:FF:000045">
    <property type="entry name" value="Ribosomal RNA large subunit methyltransferase F"/>
    <property type="match status" value="1"/>
</dbReference>
<dbReference type="Gene3D" id="3.40.50.150">
    <property type="entry name" value="Vaccinia Virus protein VP39"/>
    <property type="match status" value="1"/>
</dbReference>
<dbReference type="HAMAP" id="MF_01848">
    <property type="entry name" value="23SrRNA_methyltr_F"/>
    <property type="match status" value="1"/>
</dbReference>
<dbReference type="InterPro" id="IPR010286">
    <property type="entry name" value="METTL16/RlmF"/>
</dbReference>
<dbReference type="InterPro" id="IPR016909">
    <property type="entry name" value="rRNA_lsu_MeTfrase_F"/>
</dbReference>
<dbReference type="InterPro" id="IPR029063">
    <property type="entry name" value="SAM-dependent_MTases_sf"/>
</dbReference>
<dbReference type="NCBIfam" id="NF008725">
    <property type="entry name" value="PRK11727.1"/>
    <property type="match status" value="1"/>
</dbReference>
<dbReference type="PANTHER" id="PTHR13393:SF0">
    <property type="entry name" value="RNA N6-ADENOSINE-METHYLTRANSFERASE METTL16"/>
    <property type="match status" value="1"/>
</dbReference>
<dbReference type="PANTHER" id="PTHR13393">
    <property type="entry name" value="SAM-DEPENDENT METHYLTRANSFERASE"/>
    <property type="match status" value="1"/>
</dbReference>
<dbReference type="Pfam" id="PF05971">
    <property type="entry name" value="Methyltransf_10"/>
    <property type="match status" value="1"/>
</dbReference>
<dbReference type="PIRSF" id="PIRSF029038">
    <property type="entry name" value="Mtase_YbiN_prd"/>
    <property type="match status" value="1"/>
</dbReference>
<dbReference type="SUPFAM" id="SSF53335">
    <property type="entry name" value="S-adenosyl-L-methionine-dependent methyltransferases"/>
    <property type="match status" value="1"/>
</dbReference>
<comment type="function">
    <text evidence="1">Specifically methylates the adenine in position 1618 of 23S rRNA.</text>
</comment>
<comment type="catalytic activity">
    <reaction evidence="1">
        <text>adenosine(1618) in 23S rRNA + S-adenosyl-L-methionine = N(6)-methyladenosine(1618) in 23S rRNA + S-adenosyl-L-homocysteine + H(+)</text>
        <dbReference type="Rhea" id="RHEA:16497"/>
        <dbReference type="Rhea" id="RHEA-COMP:10229"/>
        <dbReference type="Rhea" id="RHEA-COMP:10231"/>
        <dbReference type="ChEBI" id="CHEBI:15378"/>
        <dbReference type="ChEBI" id="CHEBI:57856"/>
        <dbReference type="ChEBI" id="CHEBI:59789"/>
        <dbReference type="ChEBI" id="CHEBI:74411"/>
        <dbReference type="ChEBI" id="CHEBI:74449"/>
        <dbReference type="EC" id="2.1.1.181"/>
    </reaction>
</comment>
<comment type="subcellular location">
    <subcellularLocation>
        <location evidence="1">Cytoplasm</location>
    </subcellularLocation>
</comment>
<comment type="similarity">
    <text evidence="1">Belongs to the methyltransferase superfamily. METTL16/RlmF family.</text>
</comment>